<proteinExistence type="inferred from homology"/>
<keyword id="KW-1185">Reference proteome</keyword>
<keyword id="KW-0687">Ribonucleoprotein</keyword>
<keyword id="KW-0689">Ribosomal protein</keyword>
<reference key="1">
    <citation type="journal article" date="1998" name="FEMS Microbiol. Lett.">
        <title>Cloning and expression of the gene encoding RNA polymerase alpha subunit from alkaliphilic Bacillus sp. strain C-125.</title>
        <authorList>
            <person name="Nakasone K."/>
            <person name="Takaki Y."/>
            <person name="Takami H."/>
            <person name="Inoue A."/>
            <person name="Horikoshi K."/>
        </authorList>
    </citation>
    <scope>NUCLEOTIDE SEQUENCE [GENOMIC DNA]</scope>
    <source>
        <strain>ATCC BAA-125 / DSM 18197 / FERM 7344 / JCM 9153 / C-125</strain>
    </source>
</reference>
<reference key="2">
    <citation type="journal article" date="1999" name="Biosci. Biotechnol. Biochem.">
        <title>Sequence analysis of a 32-kb region including the major ribosomal protein gene clusters from alkaliphilic Bacillus sp. strain C-125.</title>
        <authorList>
            <person name="Takami H."/>
            <person name="Takaki Y."/>
            <person name="Nakasone K."/>
            <person name="Hirama C."/>
            <person name="Inoue A."/>
            <person name="Horikoshi K."/>
        </authorList>
    </citation>
    <scope>NUCLEOTIDE SEQUENCE [GENOMIC DNA]</scope>
    <source>
        <strain>ATCC BAA-125 / DSM 18197 / FERM 7344 / JCM 9153 / C-125</strain>
    </source>
</reference>
<reference key="3">
    <citation type="journal article" date="2000" name="Nucleic Acids Res.">
        <title>Complete genome sequence of the alkaliphilic bacterium Bacillus halodurans and genomic sequence comparison with Bacillus subtilis.</title>
        <authorList>
            <person name="Takami H."/>
            <person name="Nakasone K."/>
            <person name="Takaki Y."/>
            <person name="Maeno G."/>
            <person name="Sasaki R."/>
            <person name="Masui N."/>
            <person name="Fuji F."/>
            <person name="Hirama C."/>
            <person name="Nakamura Y."/>
            <person name="Ogasawara N."/>
            <person name="Kuhara S."/>
            <person name="Horikoshi K."/>
        </authorList>
    </citation>
    <scope>NUCLEOTIDE SEQUENCE [LARGE SCALE GENOMIC DNA]</scope>
    <source>
        <strain>ATCC BAA-125 / DSM 18197 / FERM 7344 / JCM 9153 / C-125</strain>
    </source>
</reference>
<evidence type="ECO:0000255" key="1">
    <source>
        <dbReference type="HAMAP-Rule" id="MF_00251"/>
    </source>
</evidence>
<evidence type="ECO:0000305" key="2"/>
<comment type="similarity">
    <text evidence="1">Belongs to the bacterial ribosomal protein bL36 family.</text>
</comment>
<sequence>MKVRPSVKPICEKCKVIRRKGTVMVICENPKHKQKQG</sequence>
<protein>
    <recommendedName>
        <fullName evidence="1">Large ribosomal subunit protein bL36</fullName>
    </recommendedName>
    <alternativeName>
        <fullName evidence="2">50S ribosomal protein L36</fullName>
    </alternativeName>
</protein>
<gene>
    <name evidence="1" type="primary">rpmJ</name>
    <name type="ordered locus">BH0159</name>
</gene>
<dbReference type="EMBL" id="AB010082">
    <property type="protein sequence ID" value="BAA24191.1"/>
    <property type="molecule type" value="Genomic_DNA"/>
</dbReference>
<dbReference type="EMBL" id="AB017508">
    <property type="protein sequence ID" value="BAA75295.1"/>
    <property type="molecule type" value="Genomic_DNA"/>
</dbReference>
<dbReference type="EMBL" id="BA000004">
    <property type="protein sequence ID" value="BAB03878.1"/>
    <property type="molecule type" value="Genomic_DNA"/>
</dbReference>
<dbReference type="PIR" id="T44407">
    <property type="entry name" value="T44407"/>
</dbReference>
<dbReference type="RefSeq" id="WP_003322638.1">
    <property type="nucleotide sequence ID" value="NC_002570.2"/>
</dbReference>
<dbReference type="SMR" id="O50631"/>
<dbReference type="STRING" id="272558.gene:10725999"/>
<dbReference type="GeneID" id="87595700"/>
<dbReference type="KEGG" id="bha:BH0159"/>
<dbReference type="eggNOG" id="COG0257">
    <property type="taxonomic scope" value="Bacteria"/>
</dbReference>
<dbReference type="HOGENOM" id="CLU_135723_6_2_9"/>
<dbReference type="OrthoDB" id="9802520at2"/>
<dbReference type="Proteomes" id="UP000001258">
    <property type="component" value="Chromosome"/>
</dbReference>
<dbReference type="GO" id="GO:0005737">
    <property type="term" value="C:cytoplasm"/>
    <property type="evidence" value="ECO:0007669"/>
    <property type="project" value="UniProtKB-ARBA"/>
</dbReference>
<dbReference type="GO" id="GO:1990904">
    <property type="term" value="C:ribonucleoprotein complex"/>
    <property type="evidence" value="ECO:0007669"/>
    <property type="project" value="UniProtKB-KW"/>
</dbReference>
<dbReference type="GO" id="GO:0005840">
    <property type="term" value="C:ribosome"/>
    <property type="evidence" value="ECO:0007669"/>
    <property type="project" value="UniProtKB-KW"/>
</dbReference>
<dbReference type="GO" id="GO:0003735">
    <property type="term" value="F:structural constituent of ribosome"/>
    <property type="evidence" value="ECO:0007669"/>
    <property type="project" value="InterPro"/>
</dbReference>
<dbReference type="GO" id="GO:0006412">
    <property type="term" value="P:translation"/>
    <property type="evidence" value="ECO:0007669"/>
    <property type="project" value="UniProtKB-UniRule"/>
</dbReference>
<dbReference type="HAMAP" id="MF_00251">
    <property type="entry name" value="Ribosomal_bL36"/>
    <property type="match status" value="1"/>
</dbReference>
<dbReference type="InterPro" id="IPR000473">
    <property type="entry name" value="Ribosomal_bL36"/>
</dbReference>
<dbReference type="InterPro" id="IPR035977">
    <property type="entry name" value="Ribosomal_bL36_sp"/>
</dbReference>
<dbReference type="NCBIfam" id="TIGR01022">
    <property type="entry name" value="rpmJ_bact"/>
    <property type="match status" value="1"/>
</dbReference>
<dbReference type="PANTHER" id="PTHR42888">
    <property type="entry name" value="50S RIBOSOMAL PROTEIN L36, CHLOROPLASTIC"/>
    <property type="match status" value="1"/>
</dbReference>
<dbReference type="PANTHER" id="PTHR42888:SF1">
    <property type="entry name" value="LARGE RIBOSOMAL SUBUNIT PROTEIN BL36C"/>
    <property type="match status" value="1"/>
</dbReference>
<dbReference type="Pfam" id="PF00444">
    <property type="entry name" value="Ribosomal_L36"/>
    <property type="match status" value="1"/>
</dbReference>
<dbReference type="SUPFAM" id="SSF57840">
    <property type="entry name" value="Ribosomal protein L36"/>
    <property type="match status" value="1"/>
</dbReference>
<dbReference type="PROSITE" id="PS00828">
    <property type="entry name" value="RIBOSOMAL_L36"/>
    <property type="match status" value="1"/>
</dbReference>
<accession>O50631</accession>
<accession>Q9JPW6</accession>
<name>RL36_HALH5</name>
<organism>
    <name type="scientific">Halalkalibacterium halodurans (strain ATCC BAA-125 / DSM 18197 / FERM 7344 / JCM 9153 / C-125)</name>
    <name type="common">Bacillus halodurans</name>
    <dbReference type="NCBI Taxonomy" id="272558"/>
    <lineage>
        <taxon>Bacteria</taxon>
        <taxon>Bacillati</taxon>
        <taxon>Bacillota</taxon>
        <taxon>Bacilli</taxon>
        <taxon>Bacillales</taxon>
        <taxon>Bacillaceae</taxon>
        <taxon>Halalkalibacterium (ex Joshi et al. 2022)</taxon>
    </lineage>
</organism>
<feature type="chain" id="PRO_0000126146" description="Large ribosomal subunit protein bL36">
    <location>
        <begin position="1"/>
        <end position="37"/>
    </location>
</feature>